<organism>
    <name type="scientific">Erythroxylum coca</name>
    <name type="common">Coca plant</name>
    <dbReference type="NCBI Taxonomy" id="289672"/>
    <lineage>
        <taxon>Eukaryota</taxon>
        <taxon>Viridiplantae</taxon>
        <taxon>Streptophyta</taxon>
        <taxon>Embryophyta</taxon>
        <taxon>Tracheophyta</taxon>
        <taxon>Spermatophyta</taxon>
        <taxon>Magnoliopsida</taxon>
        <taxon>eudicotyledons</taxon>
        <taxon>Gunneridae</taxon>
        <taxon>Pentapetalae</taxon>
        <taxon>rosids</taxon>
        <taxon>fabids</taxon>
        <taxon>Malpighiales</taxon>
        <taxon>Erythroxylaceae</taxon>
        <taxon>Erythroxylum</taxon>
    </lineage>
</organism>
<protein>
    <recommendedName>
        <fullName>Tropinone reductase-like 2</fullName>
        <ecNumber>1.1.1.-</ecNumber>
    </recommendedName>
</protein>
<evidence type="ECO:0000250" key="1"/>
<evidence type="ECO:0000269" key="2">
    <source>
    </source>
</evidence>
<evidence type="ECO:0000305" key="3"/>
<sequence>MTSVAGPHKRLEGKVAIITGGASGIGACTAELFHENGAKVVIADIQDDLGQALATKLGGKACYIHCDVSKEDEVINLVDTTVAKYGRLDIMFNNAGIIEGQGLPVSVVESEKSDLDRLLSVNLGGAFLGAKHATRVMVQQRKGCILFTSSVCTSIAGLSGHAYAASKSGVCGLAKNLTPELGKYGIRVNCISPYGLVTGVSNVSGEGEANREFVEAMLSELGTLSGQTLRADGIAKAALFLASDEAYYVSGINMVVDGGYSVVNPRLVDSINSKL</sequence>
<dbReference type="EC" id="1.1.1.-"/>
<dbReference type="EMBL" id="JQ015103">
    <property type="protein sequence ID" value="AFD32320.1"/>
    <property type="molecule type" value="mRNA"/>
</dbReference>
<dbReference type="SMR" id="H9BFQ1"/>
<dbReference type="GO" id="GO:0016491">
    <property type="term" value="F:oxidoreductase activity"/>
    <property type="evidence" value="ECO:0007669"/>
    <property type="project" value="UniProtKB-KW"/>
</dbReference>
<dbReference type="FunFam" id="3.40.50.720:FF:000084">
    <property type="entry name" value="Short-chain dehydrogenase reductase"/>
    <property type="match status" value="1"/>
</dbReference>
<dbReference type="Gene3D" id="3.40.50.720">
    <property type="entry name" value="NAD(P)-binding Rossmann-like Domain"/>
    <property type="match status" value="1"/>
</dbReference>
<dbReference type="InterPro" id="IPR036291">
    <property type="entry name" value="NAD(P)-bd_dom_sf"/>
</dbReference>
<dbReference type="InterPro" id="IPR002347">
    <property type="entry name" value="SDR_fam"/>
</dbReference>
<dbReference type="PANTHER" id="PTHR43180">
    <property type="entry name" value="3-OXOACYL-(ACYL-CARRIER-PROTEIN) REDUCTASE (AFU_ORTHOLOGUE AFUA_6G11210)"/>
    <property type="match status" value="1"/>
</dbReference>
<dbReference type="PANTHER" id="PTHR43180:SF91">
    <property type="entry name" value="ALCOHOL DEHYDROGENASE"/>
    <property type="match status" value="1"/>
</dbReference>
<dbReference type="Pfam" id="PF13561">
    <property type="entry name" value="adh_short_C2"/>
    <property type="match status" value="1"/>
</dbReference>
<dbReference type="PRINTS" id="PR00081">
    <property type="entry name" value="GDHRDH"/>
</dbReference>
<dbReference type="PRINTS" id="PR00080">
    <property type="entry name" value="SDRFAMILY"/>
</dbReference>
<dbReference type="SUPFAM" id="SSF51735">
    <property type="entry name" value="NAD(P)-binding Rossmann-fold domains"/>
    <property type="match status" value="1"/>
</dbReference>
<comment type="function">
    <text evidence="2">Has no tropinone reductase activity.</text>
</comment>
<comment type="similarity">
    <text evidence="3">Belongs to the short-chain dehydrogenases/reductases (SDR) family.</text>
</comment>
<name>TPRL2_ERYCB</name>
<feature type="chain" id="PRO_0000421862" description="Tropinone reductase-like 2">
    <location>
        <begin position="1"/>
        <end position="275"/>
    </location>
</feature>
<feature type="active site" description="Proton acceptor" evidence="1">
    <location>
        <position position="163"/>
    </location>
</feature>
<feature type="binding site" evidence="1">
    <location>
        <begin position="17"/>
        <end position="41"/>
    </location>
    <ligand>
        <name>NAD(+)</name>
        <dbReference type="ChEBI" id="CHEBI:57540"/>
    </ligand>
</feature>
<feature type="binding site" evidence="1">
    <location>
        <position position="150"/>
    </location>
    <ligand>
        <name>substrate</name>
    </ligand>
</feature>
<reference key="1">
    <citation type="journal article" date="2012" name="Proc. Natl. Acad. Sci. U.S.A.">
        <title>Plant tropane alkaloid biosynthesis evolved independently in the Solanaceae and Erythroxylaceae.</title>
        <authorList>
            <person name="Jirschitzka J."/>
            <person name="Schmidt G.W."/>
            <person name="Reichelt M."/>
            <person name="Schneider B."/>
            <person name="Gershenzon J."/>
            <person name="D'Auria J.C."/>
        </authorList>
    </citation>
    <scope>NUCLEOTIDE SEQUENCE [MRNA]</scope>
    <scope>FUNCTION</scope>
</reference>
<accession>H9BFQ1</accession>
<keyword id="KW-0560">Oxidoreductase</keyword>
<proteinExistence type="evidence at transcript level"/>